<proteinExistence type="inferred from homology"/>
<reference key="1">
    <citation type="submission" date="2007-06" db="EMBL/GenBank/DDBJ databases">
        <title>Complete sequence of chromosome of Staphylococcus aureus subsp. aureus JH1.</title>
        <authorList>
            <consortium name="US DOE Joint Genome Institute"/>
            <person name="Copeland A."/>
            <person name="Lucas S."/>
            <person name="Lapidus A."/>
            <person name="Barry K."/>
            <person name="Detter J.C."/>
            <person name="Glavina del Rio T."/>
            <person name="Hammon N."/>
            <person name="Israni S."/>
            <person name="Dalin E."/>
            <person name="Tice H."/>
            <person name="Pitluck S."/>
            <person name="Chain P."/>
            <person name="Malfatti S."/>
            <person name="Shin M."/>
            <person name="Vergez L."/>
            <person name="Schmutz J."/>
            <person name="Larimer F."/>
            <person name="Land M."/>
            <person name="Hauser L."/>
            <person name="Kyrpides N."/>
            <person name="Ivanova N."/>
            <person name="Tomasz A."/>
            <person name="Richardson P."/>
        </authorList>
    </citation>
    <scope>NUCLEOTIDE SEQUENCE [LARGE SCALE GENOMIC DNA]</scope>
    <source>
        <strain>JH1</strain>
    </source>
</reference>
<organism>
    <name type="scientific">Staphylococcus aureus (strain JH1)</name>
    <dbReference type="NCBI Taxonomy" id="359787"/>
    <lineage>
        <taxon>Bacteria</taxon>
        <taxon>Bacillati</taxon>
        <taxon>Bacillota</taxon>
        <taxon>Bacilli</taxon>
        <taxon>Bacillales</taxon>
        <taxon>Staphylococcaceae</taxon>
        <taxon>Staphylococcus</taxon>
    </lineage>
</organism>
<keyword id="KW-1003">Cell membrane</keyword>
<keyword id="KW-0472">Membrane</keyword>
<keyword id="KW-0812">Transmembrane</keyword>
<keyword id="KW-1133">Transmembrane helix</keyword>
<accession>A6U317</accession>
<sequence length="200" mass="22955">MSFVTENPWLMVLTIFIINVCYVTFLTMRTILTLKGYRYIAASVSFLEVLVYIVGLGLVMSNLDHIQNIIAYAFGFSIGIIVGMKIEEKLALGYTVVNVTSAEYELDLPNELRNLGYGVTHYAAFGRDGSRMVMQILTPRKYERKLMDTIKNLDPKAFIIAYEPRNIHGGFWTKGIRRRKLKDYEPEELESVVEHEIQSK</sequence>
<feature type="chain" id="PRO_1000087531" description="UPF0316 protein SaurJH1_2001">
    <location>
        <begin position="1"/>
        <end position="200"/>
    </location>
</feature>
<feature type="transmembrane region" description="Helical" evidence="1">
    <location>
        <begin position="8"/>
        <end position="28"/>
    </location>
</feature>
<feature type="transmembrane region" description="Helical" evidence="1">
    <location>
        <begin position="40"/>
        <end position="60"/>
    </location>
</feature>
<feature type="transmembrane region" description="Helical" evidence="1">
    <location>
        <begin position="66"/>
        <end position="86"/>
    </location>
</feature>
<gene>
    <name type="ordered locus">SaurJH1_2001</name>
</gene>
<dbReference type="EMBL" id="CP000736">
    <property type="protein sequence ID" value="ABR52835.1"/>
    <property type="molecule type" value="Genomic_DNA"/>
</dbReference>
<dbReference type="SMR" id="A6U317"/>
<dbReference type="KEGG" id="sah:SaurJH1_2001"/>
<dbReference type="HOGENOM" id="CLU_106166_1_0_9"/>
<dbReference type="GO" id="GO:0005886">
    <property type="term" value="C:plasma membrane"/>
    <property type="evidence" value="ECO:0007669"/>
    <property type="project" value="UniProtKB-SubCell"/>
</dbReference>
<dbReference type="CDD" id="cd16381">
    <property type="entry name" value="YitT_C_like_1"/>
    <property type="match status" value="1"/>
</dbReference>
<dbReference type="HAMAP" id="MF_01515">
    <property type="entry name" value="UPF0316"/>
    <property type="match status" value="1"/>
</dbReference>
<dbReference type="InterPro" id="IPR019264">
    <property type="entry name" value="DUF2179"/>
</dbReference>
<dbReference type="InterPro" id="IPR044035">
    <property type="entry name" value="DUF5698"/>
</dbReference>
<dbReference type="InterPro" id="IPR022930">
    <property type="entry name" value="UPF0316"/>
</dbReference>
<dbReference type="NCBIfam" id="NF003190">
    <property type="entry name" value="PRK04164.1-1"/>
    <property type="match status" value="1"/>
</dbReference>
<dbReference type="NCBIfam" id="NF003194">
    <property type="entry name" value="PRK04164.1-5"/>
    <property type="match status" value="1"/>
</dbReference>
<dbReference type="PANTHER" id="PTHR40060">
    <property type="entry name" value="UPF0316 PROTEIN YEBE"/>
    <property type="match status" value="1"/>
</dbReference>
<dbReference type="PANTHER" id="PTHR40060:SF1">
    <property type="entry name" value="UPF0316 PROTEIN YEBE"/>
    <property type="match status" value="1"/>
</dbReference>
<dbReference type="Pfam" id="PF10035">
    <property type="entry name" value="DUF2179"/>
    <property type="match status" value="1"/>
</dbReference>
<dbReference type="Pfam" id="PF18955">
    <property type="entry name" value="DUF5698"/>
    <property type="match status" value="1"/>
</dbReference>
<protein>
    <recommendedName>
        <fullName evidence="1">UPF0316 protein SaurJH1_2001</fullName>
    </recommendedName>
</protein>
<comment type="subcellular location">
    <subcellularLocation>
        <location evidence="1">Cell membrane</location>
        <topology evidence="1">Multi-pass membrane protein</topology>
    </subcellularLocation>
</comment>
<comment type="similarity">
    <text evidence="1">Belongs to the UPF0316 family.</text>
</comment>
<evidence type="ECO:0000255" key="1">
    <source>
        <dbReference type="HAMAP-Rule" id="MF_01515"/>
    </source>
</evidence>
<name>Y2001_STAA2</name>